<evidence type="ECO:0000250" key="1">
    <source>
        <dbReference type="UniProtKB" id="Q06053"/>
    </source>
</evidence>
<evidence type="ECO:0000250" key="2">
    <source>
        <dbReference type="UniProtKB" id="Q5SMC7"/>
    </source>
</evidence>
<evidence type="ECO:0000250" key="3">
    <source>
        <dbReference type="UniProtKB" id="Q91XI1"/>
    </source>
</evidence>
<evidence type="ECO:0000250" key="4">
    <source>
        <dbReference type="UniProtKB" id="Q9UTH9"/>
    </source>
</evidence>
<evidence type="ECO:0000255" key="5">
    <source>
        <dbReference type="PROSITE-ProRule" id="PRU00723"/>
    </source>
</evidence>
<evidence type="ECO:0000256" key="6">
    <source>
        <dbReference type="SAM" id="MobiDB-lite"/>
    </source>
</evidence>
<evidence type="ECO:0000269" key="7">
    <source>
    </source>
</evidence>
<evidence type="ECO:0000269" key="8">
    <source>
    </source>
</evidence>
<evidence type="ECO:0000303" key="9">
    <source>
    </source>
</evidence>
<evidence type="ECO:0000303" key="10">
    <source>
    </source>
</evidence>
<evidence type="ECO:0000303" key="11">
    <source ref="4"/>
</evidence>
<evidence type="ECO:0000305" key="12"/>
<evidence type="ECO:0000312" key="13">
    <source>
        <dbReference type="HGNC" id="HGNC:26920"/>
    </source>
</evidence>
<evidence type="ECO:0007744" key="14">
    <source>
    </source>
</evidence>
<evidence type="ECO:0007744" key="15">
    <source>
    </source>
</evidence>
<evidence type="ECO:0007744" key="16">
    <source>
    </source>
</evidence>
<evidence type="ECO:0007744" key="17">
    <source>
    </source>
</evidence>
<evidence type="ECO:0007744" key="18">
    <source>
    </source>
</evidence>
<evidence type="ECO:0007744" key="19">
    <source>
    </source>
</evidence>
<evidence type="ECO:0007744" key="20">
    <source>
    </source>
</evidence>
<evidence type="ECO:0007744" key="21">
    <source>
    </source>
</evidence>
<evidence type="ECO:0007744" key="22">
    <source>
    </source>
</evidence>
<dbReference type="EC" id="1.3.1.89" evidence="1"/>
<dbReference type="EC" id="1.3.1.-" evidence="1"/>
<dbReference type="EMBL" id="AK023958">
    <property type="protein sequence ID" value="BAB14740.1"/>
    <property type="molecule type" value="mRNA"/>
</dbReference>
<dbReference type="EMBL" id="AC011499">
    <property type="status" value="NOT_ANNOTATED_CDS"/>
    <property type="molecule type" value="Genomic_DNA"/>
</dbReference>
<dbReference type="EMBL" id="BC004549">
    <property type="protein sequence ID" value="AAH04549.1"/>
    <property type="molecule type" value="mRNA"/>
</dbReference>
<dbReference type="EMBL" id="BC008362">
    <property type="protein sequence ID" value="AAH08362.1"/>
    <property type="molecule type" value="mRNA"/>
</dbReference>
<dbReference type="EMBL" id="BC009973">
    <property type="protein sequence ID" value="AAH09973.1"/>
    <property type="molecule type" value="mRNA"/>
</dbReference>
<dbReference type="EMBL" id="AL365411">
    <property type="protein sequence ID" value="CAB96955.1"/>
    <property type="molecule type" value="mRNA"/>
</dbReference>
<dbReference type="CCDS" id="CCDS32880.1">
    <molecule id="Q96G46-1"/>
</dbReference>
<dbReference type="CCDS" id="CCDS54202.1">
    <molecule id="Q96G46-3"/>
</dbReference>
<dbReference type="RefSeq" id="NP_001155091.1">
    <molecule id="Q96G46-3"/>
    <property type="nucleotide sequence ID" value="NM_001161619.2"/>
</dbReference>
<dbReference type="RefSeq" id="NP_064560.2">
    <molecule id="Q96G46-1"/>
    <property type="nucleotide sequence ID" value="NM_020175.3"/>
</dbReference>
<dbReference type="SMR" id="Q96G46"/>
<dbReference type="BioGRID" id="121258">
    <property type="interactions" value="59"/>
</dbReference>
<dbReference type="FunCoup" id="Q96G46">
    <property type="interactions" value="1744"/>
</dbReference>
<dbReference type="IntAct" id="Q96G46">
    <property type="interactions" value="28"/>
</dbReference>
<dbReference type="STRING" id="9606.ENSP00000311977"/>
<dbReference type="GlyGen" id="Q96G46">
    <property type="glycosylation" value="2 sites, 1 O-linked glycan (1 site)"/>
</dbReference>
<dbReference type="iPTMnet" id="Q96G46"/>
<dbReference type="PhosphoSitePlus" id="Q96G46"/>
<dbReference type="BioMuta" id="DUS3L"/>
<dbReference type="DMDM" id="110808212"/>
<dbReference type="jPOST" id="Q96G46"/>
<dbReference type="MassIVE" id="Q96G46"/>
<dbReference type="PaxDb" id="9606-ENSP00000311977"/>
<dbReference type="PeptideAtlas" id="Q96G46"/>
<dbReference type="ProteomicsDB" id="76593">
    <molecule id="Q96G46-1"/>
</dbReference>
<dbReference type="ProteomicsDB" id="76594">
    <molecule id="Q96G46-2"/>
</dbReference>
<dbReference type="ProteomicsDB" id="76595">
    <molecule id="Q96G46-3"/>
</dbReference>
<dbReference type="Pumba" id="Q96G46"/>
<dbReference type="Antibodypedia" id="23988">
    <property type="antibodies" value="97 antibodies from 17 providers"/>
</dbReference>
<dbReference type="DNASU" id="56931"/>
<dbReference type="Ensembl" id="ENST00000309061.12">
    <molecule id="Q96G46-1"/>
    <property type="protein sequence ID" value="ENSP00000311977.5"/>
    <property type="gene ID" value="ENSG00000141994.16"/>
</dbReference>
<dbReference type="Ensembl" id="ENST00000320699.12">
    <molecule id="Q96G46-3"/>
    <property type="protein sequence ID" value="ENSP00000315558.7"/>
    <property type="gene ID" value="ENSG00000141994.16"/>
</dbReference>
<dbReference type="GeneID" id="56931"/>
<dbReference type="KEGG" id="hsa:56931"/>
<dbReference type="MANE-Select" id="ENST00000309061.12">
    <property type="protein sequence ID" value="ENSP00000311977.5"/>
    <property type="RefSeq nucleotide sequence ID" value="NM_020175.3"/>
    <property type="RefSeq protein sequence ID" value="NP_064560.2"/>
</dbReference>
<dbReference type="UCSC" id="uc002mdc.4">
    <molecule id="Q96G46-1"/>
    <property type="organism name" value="human"/>
</dbReference>
<dbReference type="AGR" id="HGNC:26920"/>
<dbReference type="CTD" id="56931"/>
<dbReference type="GeneCards" id="DUS3L"/>
<dbReference type="HGNC" id="HGNC:26920">
    <property type="gene designation" value="DUS3L"/>
</dbReference>
<dbReference type="HPA" id="ENSG00000141994">
    <property type="expression patterns" value="Low tissue specificity"/>
</dbReference>
<dbReference type="MIM" id="621104">
    <property type="type" value="gene"/>
</dbReference>
<dbReference type="neXtProt" id="NX_Q96G46"/>
<dbReference type="OpenTargets" id="ENSG00000141994"/>
<dbReference type="PharmGKB" id="PA142671938"/>
<dbReference type="VEuPathDB" id="HostDB:ENSG00000141994"/>
<dbReference type="eggNOG" id="KOG2333">
    <property type="taxonomic scope" value="Eukaryota"/>
</dbReference>
<dbReference type="GeneTree" id="ENSGT00550000075134"/>
<dbReference type="HOGENOM" id="CLU_013299_0_2_1"/>
<dbReference type="InParanoid" id="Q96G46"/>
<dbReference type="OMA" id="WSYIAEC"/>
<dbReference type="OrthoDB" id="259935at2759"/>
<dbReference type="PAN-GO" id="Q96G46">
    <property type="GO annotations" value="1 GO annotation based on evolutionary models"/>
</dbReference>
<dbReference type="PhylomeDB" id="Q96G46"/>
<dbReference type="TreeFam" id="TF105726"/>
<dbReference type="PathwayCommons" id="Q96G46"/>
<dbReference type="SignaLink" id="Q96G46"/>
<dbReference type="BioGRID-ORCS" id="56931">
    <property type="hits" value="25 hits in 1155 CRISPR screens"/>
</dbReference>
<dbReference type="ChiTaRS" id="DUS3L">
    <property type="organism name" value="human"/>
</dbReference>
<dbReference type="GenomeRNAi" id="56931"/>
<dbReference type="Pharos" id="Q96G46">
    <property type="development level" value="Tbio"/>
</dbReference>
<dbReference type="PRO" id="PR:Q96G46"/>
<dbReference type="Proteomes" id="UP000005640">
    <property type="component" value="Chromosome 19"/>
</dbReference>
<dbReference type="RNAct" id="Q96G46">
    <property type="molecule type" value="protein"/>
</dbReference>
<dbReference type="Bgee" id="ENSG00000141994">
    <property type="expression patterns" value="Expressed in right testis and 135 other cell types or tissues"/>
</dbReference>
<dbReference type="ExpressionAtlas" id="Q96G46">
    <property type="expression patterns" value="baseline and differential"/>
</dbReference>
<dbReference type="GO" id="GO:0050660">
    <property type="term" value="F:flavin adenine dinucleotide binding"/>
    <property type="evidence" value="ECO:0007669"/>
    <property type="project" value="InterPro"/>
</dbReference>
<dbReference type="GO" id="GO:0106414">
    <property type="term" value="F:mRNA dihydrouridine synthase activity"/>
    <property type="evidence" value="ECO:0000314"/>
    <property type="project" value="UniProtKB"/>
</dbReference>
<dbReference type="GO" id="GO:0003723">
    <property type="term" value="F:RNA binding"/>
    <property type="evidence" value="ECO:0007005"/>
    <property type="project" value="UniProtKB"/>
</dbReference>
<dbReference type="GO" id="GO:0017150">
    <property type="term" value="F:tRNA dihydrouridine synthase activity"/>
    <property type="evidence" value="ECO:0000318"/>
    <property type="project" value="GO_Central"/>
</dbReference>
<dbReference type="GO" id="GO:0102265">
    <property type="term" value="F:tRNA-dihydrouridine47 synthase activity"/>
    <property type="evidence" value="ECO:0000314"/>
    <property type="project" value="UniProtKB"/>
</dbReference>
<dbReference type="GO" id="GO:0008270">
    <property type="term" value="F:zinc ion binding"/>
    <property type="evidence" value="ECO:0007669"/>
    <property type="project" value="UniProtKB-KW"/>
</dbReference>
<dbReference type="GO" id="GO:0006397">
    <property type="term" value="P:mRNA processing"/>
    <property type="evidence" value="ECO:0007669"/>
    <property type="project" value="UniProtKB-KW"/>
</dbReference>
<dbReference type="GO" id="GO:0006417">
    <property type="term" value="P:regulation of translation"/>
    <property type="evidence" value="ECO:0000314"/>
    <property type="project" value="UniProtKB"/>
</dbReference>
<dbReference type="GO" id="GO:0002943">
    <property type="term" value="P:tRNA dihydrouridine synthesis"/>
    <property type="evidence" value="ECO:0000314"/>
    <property type="project" value="UniProtKB"/>
</dbReference>
<dbReference type="CDD" id="cd02801">
    <property type="entry name" value="DUS_like_FMN"/>
    <property type="match status" value="1"/>
</dbReference>
<dbReference type="FunFam" id="3.20.20.70:FF:000067">
    <property type="entry name" value="tRNA-dihydrouridine(47) synthase [NAD(P)(+)]"/>
    <property type="match status" value="1"/>
</dbReference>
<dbReference type="FunFam" id="4.10.1000.10:FF:000029">
    <property type="entry name" value="tRNA-dihydrouridine(47) synthase [NAD(P)(+)]"/>
    <property type="match status" value="1"/>
</dbReference>
<dbReference type="Gene3D" id="3.20.20.70">
    <property type="entry name" value="Aldolase class I"/>
    <property type="match status" value="1"/>
</dbReference>
<dbReference type="Gene3D" id="4.10.1000.10">
    <property type="entry name" value="Zinc finger, CCCH-type"/>
    <property type="match status" value="1"/>
</dbReference>
<dbReference type="InterPro" id="IPR013785">
    <property type="entry name" value="Aldolase_TIM"/>
</dbReference>
<dbReference type="InterPro" id="IPR035587">
    <property type="entry name" value="DUS-like_FMN-bd"/>
</dbReference>
<dbReference type="InterPro" id="IPR018517">
    <property type="entry name" value="tRNA_hU_synthase_CS"/>
</dbReference>
<dbReference type="InterPro" id="IPR000571">
    <property type="entry name" value="Znf_CCCH"/>
</dbReference>
<dbReference type="PANTHER" id="PTHR45846">
    <property type="entry name" value="TRNA-DIHYDROURIDINE(47) SYNTHASE [NAD(P)(+)]-LIKE"/>
    <property type="match status" value="1"/>
</dbReference>
<dbReference type="PANTHER" id="PTHR45846:SF1">
    <property type="entry name" value="TRNA-DIHYDROURIDINE(47) SYNTHASE [NAD(P)(+)]-LIKE"/>
    <property type="match status" value="1"/>
</dbReference>
<dbReference type="Pfam" id="PF01207">
    <property type="entry name" value="Dus"/>
    <property type="match status" value="1"/>
</dbReference>
<dbReference type="SUPFAM" id="SSF51395">
    <property type="entry name" value="FMN-linked oxidoreductases"/>
    <property type="match status" value="1"/>
</dbReference>
<dbReference type="PROSITE" id="PS01136">
    <property type="entry name" value="UPF0034"/>
    <property type="match status" value="1"/>
</dbReference>
<dbReference type="PROSITE" id="PS50103">
    <property type="entry name" value="ZF_C3H1"/>
    <property type="match status" value="2"/>
</dbReference>
<organism>
    <name type="scientific">Homo sapiens</name>
    <name type="common">Human</name>
    <dbReference type="NCBI Taxonomy" id="9606"/>
    <lineage>
        <taxon>Eukaryota</taxon>
        <taxon>Metazoa</taxon>
        <taxon>Chordata</taxon>
        <taxon>Craniata</taxon>
        <taxon>Vertebrata</taxon>
        <taxon>Euteleostomi</taxon>
        <taxon>Mammalia</taxon>
        <taxon>Eutheria</taxon>
        <taxon>Euarchontoglires</taxon>
        <taxon>Primates</taxon>
        <taxon>Haplorrhini</taxon>
        <taxon>Catarrhini</taxon>
        <taxon>Hominidae</taxon>
        <taxon>Homo</taxon>
    </lineage>
</organism>
<feature type="initiator methionine" description="Removed" evidence="16 19">
    <location>
        <position position="1"/>
    </location>
</feature>
<feature type="chain" id="PRO_0000247342" description="tRNA-dihydrouridine(47) synthase [NAD(P)(+)]-like">
    <location>
        <begin position="2"/>
        <end position="650"/>
    </location>
</feature>
<feature type="zinc finger region" description="C3H1-type 1" evidence="5">
    <location>
        <begin position="118"/>
        <end position="148"/>
    </location>
</feature>
<feature type="zinc finger region" description="C3H1-type 2" evidence="5">
    <location>
        <begin position="156"/>
        <end position="186"/>
    </location>
</feature>
<feature type="region of interest" description="Disordered" evidence="6">
    <location>
        <begin position="1"/>
        <end position="24"/>
    </location>
</feature>
<feature type="region of interest" description="Disordered" evidence="6">
    <location>
        <begin position="46"/>
        <end position="120"/>
    </location>
</feature>
<feature type="region of interest" description="Disordered" evidence="6">
    <location>
        <begin position="235"/>
        <end position="284"/>
    </location>
</feature>
<feature type="compositionally biased region" description="Basic and acidic residues" evidence="6">
    <location>
        <begin position="48"/>
        <end position="58"/>
    </location>
</feature>
<feature type="compositionally biased region" description="Basic and acidic residues" evidence="6">
    <location>
        <begin position="70"/>
        <end position="79"/>
    </location>
</feature>
<feature type="compositionally biased region" description="Basic residues" evidence="6">
    <location>
        <begin position="101"/>
        <end position="113"/>
    </location>
</feature>
<feature type="active site" description="Proton donor" evidence="8">
    <location>
        <position position="396"/>
    </location>
</feature>
<feature type="binding site" evidence="2">
    <location>
        <begin position="311"/>
        <end position="313"/>
    </location>
    <ligand>
        <name>FMN</name>
        <dbReference type="ChEBI" id="CHEBI:58210"/>
    </ligand>
</feature>
<feature type="binding site" evidence="2">
    <location>
        <position position="365"/>
    </location>
    <ligand>
        <name>FMN</name>
        <dbReference type="ChEBI" id="CHEBI:58210"/>
    </ligand>
</feature>
<feature type="binding site" evidence="2">
    <location>
        <position position="435"/>
    </location>
    <ligand>
        <name>FMN</name>
        <dbReference type="ChEBI" id="CHEBI:58210"/>
    </ligand>
</feature>
<feature type="binding site" evidence="2">
    <location>
        <position position="465"/>
    </location>
    <ligand>
        <name>FMN</name>
        <dbReference type="ChEBI" id="CHEBI:58210"/>
    </ligand>
</feature>
<feature type="binding site" evidence="2">
    <location>
        <begin position="497"/>
        <end position="499"/>
    </location>
    <ligand>
        <name>FMN</name>
        <dbReference type="ChEBI" id="CHEBI:58210"/>
    </ligand>
</feature>
<feature type="binding site" evidence="2">
    <location>
        <begin position="520"/>
        <end position="521"/>
    </location>
    <ligand>
        <name>FMN</name>
        <dbReference type="ChEBI" id="CHEBI:58210"/>
    </ligand>
</feature>
<feature type="modified residue" description="N-acetylalanine" evidence="16 19">
    <location>
        <position position="2"/>
    </location>
</feature>
<feature type="modified residue" description="Phosphoserine" evidence="14 15 18 20">
    <location>
        <position position="236"/>
    </location>
</feature>
<feature type="modified residue" description="Phosphothreonine" evidence="17 21">
    <location>
        <position position="273"/>
    </location>
</feature>
<feature type="modified residue" description="Phosphoserine" evidence="21">
    <location>
        <position position="276"/>
    </location>
</feature>
<feature type="modified residue" description="Phosphoserine" evidence="3">
    <location>
        <position position="277"/>
    </location>
</feature>
<feature type="cross-link" description="Glycyl lysine isopeptide (Lys-Gly) (interchain with G-Cter in SUMO2)" evidence="22">
    <location>
        <position position="416"/>
    </location>
</feature>
<feature type="splice variant" id="VSP_019970" description="In isoform 3." evidence="9">
    <location>
        <begin position="59"/>
        <end position="300"/>
    </location>
</feature>
<feature type="splice variant" id="VSP_019971" description="In isoform 2." evidence="11">
    <original>LHGRSREQRYTKLADWQYI</original>
    <variation>VGLGTPRALGPRGRPRVPS</variation>
    <location>
        <begin position="464"/>
        <end position="482"/>
    </location>
</feature>
<feature type="splice variant" id="VSP_019972" description="In isoform 2." evidence="11">
    <location>
        <begin position="483"/>
        <end position="650"/>
    </location>
</feature>
<feature type="sequence variant" id="VAR_027092" description="In dbSNP:rs2436487." evidence="7">
    <original>R</original>
    <variation>G</variation>
    <location>
        <position position="185"/>
    </location>
</feature>
<feature type="sequence variant" id="VAR_027093" description="In dbSNP:rs12977803.">
    <original>D</original>
    <variation>N</variation>
    <location>
        <position position="609"/>
    </location>
</feature>
<feature type="mutagenesis site" description="Abolished synthesis of dihydrouridine." evidence="8">
    <original>C</original>
    <variation>A</variation>
    <location>
        <position position="396"/>
    </location>
</feature>
<feature type="sequence conflict" description="In Ref. 1; BAB14740." evidence="12" ref="1">
    <original>K</original>
    <variation>N</variation>
    <location>
        <position position="134"/>
    </location>
</feature>
<accession>Q96G46</accession>
<accession>Q96HM5</accession>
<accession>Q9BSU4</accession>
<accession>Q9H877</accession>
<accession>Q9NPR1</accession>
<protein>
    <recommendedName>
        <fullName evidence="12">tRNA-dihydrouridine(47) synthase [NAD(P)(+)]-like</fullName>
        <ecNumber evidence="1">1.3.1.89</ecNumber>
    </recommendedName>
    <alternativeName>
        <fullName evidence="12">mRNA-dihydrouridine synthase DUS3L</fullName>
        <ecNumber evidence="1">1.3.1.-</ecNumber>
    </alternativeName>
    <alternativeName>
        <fullName evidence="12">tRNA-dihydrouridine synthase 3-like</fullName>
    </alternativeName>
</protein>
<comment type="function">
    <text evidence="8">Catalyzes the synthesis of dihydrouridine, a modified base, in various RNAs, such as tRNAs, mRNAs and some long non-coding RNAs (lncRNAs) (PubMed:34556860). Mainly modifies the uridine in position 47 (U47) in the D-loop of most cytoplasmic tRNAs (PubMed:34556860). Also able to mediate the formation of dihydrouridine in some mRNAs, thereby regulating their translation (PubMed:34556860).</text>
</comment>
<comment type="catalytic activity">
    <reaction evidence="1">
        <text>5,6-dihydrouridine(47) in tRNA + NAD(+) = uridine(47) in tRNA + NADH + H(+)</text>
        <dbReference type="Rhea" id="RHEA:53364"/>
        <dbReference type="Rhea" id="RHEA-COMP:13539"/>
        <dbReference type="Rhea" id="RHEA-COMP:13540"/>
        <dbReference type="ChEBI" id="CHEBI:15378"/>
        <dbReference type="ChEBI" id="CHEBI:57540"/>
        <dbReference type="ChEBI" id="CHEBI:57945"/>
        <dbReference type="ChEBI" id="CHEBI:65315"/>
        <dbReference type="ChEBI" id="CHEBI:74443"/>
        <dbReference type="EC" id="1.3.1.89"/>
    </reaction>
    <physiologicalReaction direction="right-to-left" evidence="1">
        <dbReference type="Rhea" id="RHEA:53366"/>
    </physiologicalReaction>
</comment>
<comment type="catalytic activity">
    <reaction evidence="1">
        <text>5,6-dihydrouridine(47) in tRNA + NADP(+) = uridine(47) in tRNA + NADPH + H(+)</text>
        <dbReference type="Rhea" id="RHEA:53360"/>
        <dbReference type="Rhea" id="RHEA-COMP:13539"/>
        <dbReference type="Rhea" id="RHEA-COMP:13540"/>
        <dbReference type="ChEBI" id="CHEBI:15378"/>
        <dbReference type="ChEBI" id="CHEBI:57783"/>
        <dbReference type="ChEBI" id="CHEBI:58349"/>
        <dbReference type="ChEBI" id="CHEBI:65315"/>
        <dbReference type="ChEBI" id="CHEBI:74443"/>
        <dbReference type="EC" id="1.3.1.89"/>
    </reaction>
    <physiologicalReaction direction="right-to-left" evidence="1">
        <dbReference type="Rhea" id="RHEA:53362"/>
    </physiologicalReaction>
</comment>
<comment type="catalytic activity">
    <reaction evidence="4">
        <text>a 5,6-dihydrouridine in mRNA + NAD(+) = a uridine in mRNA + NADH + H(+)</text>
        <dbReference type="Rhea" id="RHEA:69851"/>
        <dbReference type="Rhea" id="RHEA-COMP:14658"/>
        <dbReference type="Rhea" id="RHEA-COMP:17789"/>
        <dbReference type="ChEBI" id="CHEBI:15378"/>
        <dbReference type="ChEBI" id="CHEBI:57540"/>
        <dbReference type="ChEBI" id="CHEBI:57945"/>
        <dbReference type="ChEBI" id="CHEBI:65315"/>
        <dbReference type="ChEBI" id="CHEBI:74443"/>
    </reaction>
    <physiologicalReaction direction="right-to-left" evidence="4">
        <dbReference type="Rhea" id="RHEA:69853"/>
    </physiologicalReaction>
</comment>
<comment type="catalytic activity">
    <reaction evidence="4">
        <text>a 5,6-dihydrouridine in mRNA + NADP(+) = a uridine in mRNA + NADPH + H(+)</text>
        <dbReference type="Rhea" id="RHEA:69855"/>
        <dbReference type="Rhea" id="RHEA-COMP:14658"/>
        <dbReference type="Rhea" id="RHEA-COMP:17789"/>
        <dbReference type="ChEBI" id="CHEBI:15378"/>
        <dbReference type="ChEBI" id="CHEBI:57783"/>
        <dbReference type="ChEBI" id="CHEBI:58349"/>
        <dbReference type="ChEBI" id="CHEBI:65315"/>
        <dbReference type="ChEBI" id="CHEBI:74443"/>
    </reaction>
    <physiologicalReaction direction="right-to-left" evidence="4">
        <dbReference type="Rhea" id="RHEA:69857"/>
    </physiologicalReaction>
</comment>
<comment type="cofactor">
    <cofactor evidence="2">
        <name>FMN</name>
        <dbReference type="ChEBI" id="CHEBI:58210"/>
    </cofactor>
</comment>
<comment type="interaction">
    <interactant intactId="EBI-5458011">
        <id>Q96G46</id>
    </interactant>
    <interactant intactId="EBI-748974">
        <id>Q96CV9</id>
        <label>OPTN</label>
    </interactant>
    <organismsDiffer>false</organismsDiffer>
    <experiments>3</experiments>
</comment>
<comment type="alternative products">
    <event type="alternative splicing"/>
    <isoform>
        <id>Q96G46-1</id>
        <name>1</name>
        <sequence type="displayed"/>
    </isoform>
    <isoform>
        <id>Q96G46-2</id>
        <name>2</name>
        <sequence type="described" ref="VSP_019971 VSP_019972"/>
    </isoform>
    <isoform>
        <id>Q96G46-3</id>
        <name>3</name>
        <sequence type="described" ref="VSP_019970"/>
    </isoform>
</comment>
<comment type="miscellaneous">
    <molecule>Isoform 2</molecule>
    <text evidence="12">May be produced at very low levels due to a premature stop codon in the mRNA, leading to nonsense-mediated mRNA decay.</text>
</comment>
<comment type="similarity">
    <text evidence="12">Belongs to the Dus family. Dus3 subfamily.</text>
</comment>
<reference key="1">
    <citation type="journal article" date="2004" name="Nat. Genet.">
        <title>Complete sequencing and characterization of 21,243 full-length human cDNAs.</title>
        <authorList>
            <person name="Ota T."/>
            <person name="Suzuki Y."/>
            <person name="Nishikawa T."/>
            <person name="Otsuki T."/>
            <person name="Sugiyama T."/>
            <person name="Irie R."/>
            <person name="Wakamatsu A."/>
            <person name="Hayashi K."/>
            <person name="Sato H."/>
            <person name="Nagai K."/>
            <person name="Kimura K."/>
            <person name="Makita H."/>
            <person name="Sekine M."/>
            <person name="Obayashi M."/>
            <person name="Nishi T."/>
            <person name="Shibahara T."/>
            <person name="Tanaka T."/>
            <person name="Ishii S."/>
            <person name="Yamamoto J."/>
            <person name="Saito K."/>
            <person name="Kawai Y."/>
            <person name="Isono Y."/>
            <person name="Nakamura Y."/>
            <person name="Nagahari K."/>
            <person name="Murakami K."/>
            <person name="Yasuda T."/>
            <person name="Iwayanagi T."/>
            <person name="Wagatsuma M."/>
            <person name="Shiratori A."/>
            <person name="Sudo H."/>
            <person name="Hosoiri T."/>
            <person name="Kaku Y."/>
            <person name="Kodaira H."/>
            <person name="Kondo H."/>
            <person name="Sugawara M."/>
            <person name="Takahashi M."/>
            <person name="Kanda K."/>
            <person name="Yokoi T."/>
            <person name="Furuya T."/>
            <person name="Kikkawa E."/>
            <person name="Omura Y."/>
            <person name="Abe K."/>
            <person name="Kamihara K."/>
            <person name="Katsuta N."/>
            <person name="Sato K."/>
            <person name="Tanikawa M."/>
            <person name="Yamazaki M."/>
            <person name="Ninomiya K."/>
            <person name="Ishibashi T."/>
            <person name="Yamashita H."/>
            <person name="Murakawa K."/>
            <person name="Fujimori K."/>
            <person name="Tanai H."/>
            <person name="Kimata M."/>
            <person name="Watanabe M."/>
            <person name="Hiraoka S."/>
            <person name="Chiba Y."/>
            <person name="Ishida S."/>
            <person name="Ono Y."/>
            <person name="Takiguchi S."/>
            <person name="Watanabe S."/>
            <person name="Yosida M."/>
            <person name="Hotuta T."/>
            <person name="Kusano J."/>
            <person name="Kanehori K."/>
            <person name="Takahashi-Fujii A."/>
            <person name="Hara H."/>
            <person name="Tanase T.-O."/>
            <person name="Nomura Y."/>
            <person name="Togiya S."/>
            <person name="Komai F."/>
            <person name="Hara R."/>
            <person name="Takeuchi K."/>
            <person name="Arita M."/>
            <person name="Imose N."/>
            <person name="Musashino K."/>
            <person name="Yuuki H."/>
            <person name="Oshima A."/>
            <person name="Sasaki N."/>
            <person name="Aotsuka S."/>
            <person name="Yoshikawa Y."/>
            <person name="Matsunawa H."/>
            <person name="Ichihara T."/>
            <person name="Shiohata N."/>
            <person name="Sano S."/>
            <person name="Moriya S."/>
            <person name="Momiyama H."/>
            <person name="Satoh N."/>
            <person name="Takami S."/>
            <person name="Terashima Y."/>
            <person name="Suzuki O."/>
            <person name="Nakagawa S."/>
            <person name="Senoh A."/>
            <person name="Mizoguchi H."/>
            <person name="Goto Y."/>
            <person name="Shimizu F."/>
            <person name="Wakebe H."/>
            <person name="Hishigaki H."/>
            <person name="Watanabe T."/>
            <person name="Sugiyama A."/>
            <person name="Takemoto M."/>
            <person name="Kawakami B."/>
            <person name="Yamazaki M."/>
            <person name="Watanabe K."/>
            <person name="Kumagai A."/>
            <person name="Itakura S."/>
            <person name="Fukuzumi Y."/>
            <person name="Fujimori Y."/>
            <person name="Komiyama M."/>
            <person name="Tashiro H."/>
            <person name="Tanigami A."/>
            <person name="Fujiwara T."/>
            <person name="Ono T."/>
            <person name="Yamada K."/>
            <person name="Fujii Y."/>
            <person name="Ozaki K."/>
            <person name="Hirao M."/>
            <person name="Ohmori Y."/>
            <person name="Kawabata A."/>
            <person name="Hikiji T."/>
            <person name="Kobatake N."/>
            <person name="Inagaki H."/>
            <person name="Ikema Y."/>
            <person name="Okamoto S."/>
            <person name="Okitani R."/>
            <person name="Kawakami T."/>
            <person name="Noguchi S."/>
            <person name="Itoh T."/>
            <person name="Shigeta K."/>
            <person name="Senba T."/>
            <person name="Matsumura K."/>
            <person name="Nakajima Y."/>
            <person name="Mizuno T."/>
            <person name="Morinaga M."/>
            <person name="Sasaki M."/>
            <person name="Togashi T."/>
            <person name="Oyama M."/>
            <person name="Hata H."/>
            <person name="Watanabe M."/>
            <person name="Komatsu T."/>
            <person name="Mizushima-Sugano J."/>
            <person name="Satoh T."/>
            <person name="Shirai Y."/>
            <person name="Takahashi Y."/>
            <person name="Nakagawa K."/>
            <person name="Okumura K."/>
            <person name="Nagase T."/>
            <person name="Nomura N."/>
            <person name="Kikuchi H."/>
            <person name="Masuho Y."/>
            <person name="Yamashita R."/>
            <person name="Nakai K."/>
            <person name="Yada T."/>
            <person name="Nakamura Y."/>
            <person name="Ohara O."/>
            <person name="Isogai T."/>
            <person name="Sugano S."/>
        </authorList>
    </citation>
    <scope>NUCLEOTIDE SEQUENCE [LARGE SCALE MRNA] (ISOFORM 1)</scope>
    <source>
        <tissue>Thyroid</tissue>
    </source>
</reference>
<reference key="2">
    <citation type="journal article" date="2004" name="Nature">
        <title>The DNA sequence and biology of human chromosome 19.</title>
        <authorList>
            <person name="Grimwood J."/>
            <person name="Gordon L.A."/>
            <person name="Olsen A.S."/>
            <person name="Terry A."/>
            <person name="Schmutz J."/>
            <person name="Lamerdin J.E."/>
            <person name="Hellsten U."/>
            <person name="Goodstein D."/>
            <person name="Couronne O."/>
            <person name="Tran-Gyamfi M."/>
            <person name="Aerts A."/>
            <person name="Altherr M."/>
            <person name="Ashworth L."/>
            <person name="Bajorek E."/>
            <person name="Black S."/>
            <person name="Branscomb E."/>
            <person name="Caenepeel S."/>
            <person name="Carrano A.V."/>
            <person name="Caoile C."/>
            <person name="Chan Y.M."/>
            <person name="Christensen M."/>
            <person name="Cleland C.A."/>
            <person name="Copeland A."/>
            <person name="Dalin E."/>
            <person name="Dehal P."/>
            <person name="Denys M."/>
            <person name="Detter J.C."/>
            <person name="Escobar J."/>
            <person name="Flowers D."/>
            <person name="Fotopulos D."/>
            <person name="Garcia C."/>
            <person name="Georgescu A.M."/>
            <person name="Glavina T."/>
            <person name="Gomez M."/>
            <person name="Gonzales E."/>
            <person name="Groza M."/>
            <person name="Hammon N."/>
            <person name="Hawkins T."/>
            <person name="Haydu L."/>
            <person name="Ho I."/>
            <person name="Huang W."/>
            <person name="Israni S."/>
            <person name="Jett J."/>
            <person name="Kadner K."/>
            <person name="Kimball H."/>
            <person name="Kobayashi A."/>
            <person name="Larionov V."/>
            <person name="Leem S.-H."/>
            <person name="Lopez F."/>
            <person name="Lou Y."/>
            <person name="Lowry S."/>
            <person name="Malfatti S."/>
            <person name="Martinez D."/>
            <person name="McCready P.M."/>
            <person name="Medina C."/>
            <person name="Morgan J."/>
            <person name="Nelson K."/>
            <person name="Nolan M."/>
            <person name="Ovcharenko I."/>
            <person name="Pitluck S."/>
            <person name="Pollard M."/>
            <person name="Popkie A.P."/>
            <person name="Predki P."/>
            <person name="Quan G."/>
            <person name="Ramirez L."/>
            <person name="Rash S."/>
            <person name="Retterer J."/>
            <person name="Rodriguez A."/>
            <person name="Rogers S."/>
            <person name="Salamov A."/>
            <person name="Salazar A."/>
            <person name="She X."/>
            <person name="Smith D."/>
            <person name="Slezak T."/>
            <person name="Solovyev V."/>
            <person name="Thayer N."/>
            <person name="Tice H."/>
            <person name="Tsai M."/>
            <person name="Ustaszewska A."/>
            <person name="Vo N."/>
            <person name="Wagner M."/>
            <person name="Wheeler J."/>
            <person name="Wu K."/>
            <person name="Xie G."/>
            <person name="Yang J."/>
            <person name="Dubchak I."/>
            <person name="Furey T.S."/>
            <person name="DeJong P."/>
            <person name="Dickson M."/>
            <person name="Gordon D."/>
            <person name="Eichler E.E."/>
            <person name="Pennacchio L.A."/>
            <person name="Richardson P."/>
            <person name="Stubbs L."/>
            <person name="Rokhsar D.S."/>
            <person name="Myers R.M."/>
            <person name="Rubin E.M."/>
            <person name="Lucas S.M."/>
        </authorList>
    </citation>
    <scope>NUCLEOTIDE SEQUENCE [LARGE SCALE GENOMIC DNA]</scope>
</reference>
<reference key="3">
    <citation type="journal article" date="2004" name="Genome Res.">
        <title>The status, quality, and expansion of the NIH full-length cDNA project: the Mammalian Gene Collection (MGC).</title>
        <authorList>
            <consortium name="The MGC Project Team"/>
        </authorList>
    </citation>
    <scope>NUCLEOTIDE SEQUENCE [LARGE SCALE MRNA] (ISOFORMS 1 AND 3)</scope>
    <scope>VARIANT GLY-185</scope>
    <source>
        <tissue>Pancreas</tissue>
        <tissue>Placenta</tissue>
        <tissue>Uterus</tissue>
    </source>
</reference>
<reference key="4">
    <citation type="submission" date="2000-07" db="EMBL/GenBank/DDBJ databases">
        <authorList>
            <consortium name="The European IMAGE consortium"/>
        </authorList>
    </citation>
    <scope>NUCLEOTIDE SEQUENCE [LARGE SCALE MRNA] OF 18-650 (ISOFORM 2)</scope>
</reference>
<reference key="5">
    <citation type="journal article" date="2006" name="Cell">
        <title>Global, in vivo, and site-specific phosphorylation dynamics in signaling networks.</title>
        <authorList>
            <person name="Olsen J.V."/>
            <person name="Blagoev B."/>
            <person name="Gnad F."/>
            <person name="Macek B."/>
            <person name="Kumar C."/>
            <person name="Mortensen P."/>
            <person name="Mann M."/>
        </authorList>
    </citation>
    <scope>IDENTIFICATION BY MASS SPECTROMETRY [LARGE SCALE ANALYSIS]</scope>
    <source>
        <tissue>Cervix carcinoma</tissue>
    </source>
</reference>
<reference key="6">
    <citation type="journal article" date="2006" name="Nat. Biotechnol.">
        <title>A probability-based approach for high-throughput protein phosphorylation analysis and site localization.</title>
        <authorList>
            <person name="Beausoleil S.A."/>
            <person name="Villen J."/>
            <person name="Gerber S.A."/>
            <person name="Rush J."/>
            <person name="Gygi S.P."/>
        </authorList>
    </citation>
    <scope>IDENTIFICATION BY MASS SPECTROMETRY [LARGE SCALE ANALYSIS]</scope>
    <source>
        <tissue>Cervix carcinoma</tissue>
    </source>
</reference>
<reference key="7">
    <citation type="journal article" date="2008" name="J. Proteome Res.">
        <title>Combining protein-based IMAC, peptide-based IMAC, and MudPIT for efficient phosphoproteomic analysis.</title>
        <authorList>
            <person name="Cantin G.T."/>
            <person name="Yi W."/>
            <person name="Lu B."/>
            <person name="Park S.K."/>
            <person name="Xu T."/>
            <person name="Lee J.-D."/>
            <person name="Yates J.R. III"/>
        </authorList>
    </citation>
    <scope>PHOSPHORYLATION [LARGE SCALE ANALYSIS] AT SER-236</scope>
    <scope>IDENTIFICATION BY MASS SPECTROMETRY [LARGE SCALE ANALYSIS]</scope>
    <source>
        <tissue>Cervix carcinoma</tissue>
    </source>
</reference>
<reference key="8">
    <citation type="journal article" date="2008" name="Proc. Natl. Acad. Sci. U.S.A.">
        <title>A quantitative atlas of mitotic phosphorylation.</title>
        <authorList>
            <person name="Dephoure N."/>
            <person name="Zhou C."/>
            <person name="Villen J."/>
            <person name="Beausoleil S.A."/>
            <person name="Bakalarski C.E."/>
            <person name="Elledge S.J."/>
            <person name="Gygi S.P."/>
        </authorList>
    </citation>
    <scope>PHOSPHORYLATION [LARGE SCALE ANALYSIS] AT SER-236</scope>
    <scope>IDENTIFICATION BY MASS SPECTROMETRY [LARGE SCALE ANALYSIS]</scope>
    <source>
        <tissue>Cervix carcinoma</tissue>
    </source>
</reference>
<reference key="9">
    <citation type="journal article" date="2009" name="Anal. Chem.">
        <title>Lys-N and trypsin cover complementary parts of the phosphoproteome in a refined SCX-based approach.</title>
        <authorList>
            <person name="Gauci S."/>
            <person name="Helbig A.O."/>
            <person name="Slijper M."/>
            <person name="Krijgsveld J."/>
            <person name="Heck A.J."/>
            <person name="Mohammed S."/>
        </authorList>
    </citation>
    <scope>ACETYLATION [LARGE SCALE ANALYSIS] AT ALA-2</scope>
    <scope>CLEAVAGE OF INITIATOR METHIONINE [LARGE SCALE ANALYSIS]</scope>
    <scope>IDENTIFICATION BY MASS SPECTROMETRY [LARGE SCALE ANALYSIS]</scope>
</reference>
<reference key="10">
    <citation type="journal article" date="2009" name="Sci. Signal.">
        <title>Quantitative phosphoproteomic analysis of T cell receptor signaling reveals system-wide modulation of protein-protein interactions.</title>
        <authorList>
            <person name="Mayya V."/>
            <person name="Lundgren D.H."/>
            <person name="Hwang S.-I."/>
            <person name="Rezaul K."/>
            <person name="Wu L."/>
            <person name="Eng J.K."/>
            <person name="Rodionov V."/>
            <person name="Han D.K."/>
        </authorList>
    </citation>
    <scope>PHOSPHORYLATION [LARGE SCALE ANALYSIS] AT THR-273</scope>
    <scope>IDENTIFICATION BY MASS SPECTROMETRY [LARGE SCALE ANALYSIS]</scope>
    <source>
        <tissue>Leukemic T-cell</tissue>
    </source>
</reference>
<reference key="11">
    <citation type="journal article" date="2010" name="Sci. Signal.">
        <title>Quantitative phosphoproteomics reveals widespread full phosphorylation site occupancy during mitosis.</title>
        <authorList>
            <person name="Olsen J.V."/>
            <person name="Vermeulen M."/>
            <person name="Santamaria A."/>
            <person name="Kumar C."/>
            <person name="Miller M.L."/>
            <person name="Jensen L.J."/>
            <person name="Gnad F."/>
            <person name="Cox J."/>
            <person name="Jensen T.S."/>
            <person name="Nigg E.A."/>
            <person name="Brunak S."/>
            <person name="Mann M."/>
        </authorList>
    </citation>
    <scope>PHOSPHORYLATION [LARGE SCALE ANALYSIS] AT SER-236</scope>
    <scope>IDENTIFICATION BY MASS SPECTROMETRY [LARGE SCALE ANALYSIS]</scope>
    <source>
        <tissue>Cervix carcinoma</tissue>
    </source>
</reference>
<reference key="12">
    <citation type="journal article" date="2011" name="BMC Syst. Biol.">
        <title>Initial characterization of the human central proteome.</title>
        <authorList>
            <person name="Burkard T.R."/>
            <person name="Planyavsky M."/>
            <person name="Kaupe I."/>
            <person name="Breitwieser F.P."/>
            <person name="Buerckstuemmer T."/>
            <person name="Bennett K.L."/>
            <person name="Superti-Furga G."/>
            <person name="Colinge J."/>
        </authorList>
    </citation>
    <scope>IDENTIFICATION BY MASS SPECTROMETRY [LARGE SCALE ANALYSIS]</scope>
</reference>
<reference key="13">
    <citation type="journal article" date="2012" name="Proc. Natl. Acad. Sci. U.S.A.">
        <title>N-terminal acetylome analyses and functional insights of the N-terminal acetyltransferase NatB.</title>
        <authorList>
            <person name="Van Damme P."/>
            <person name="Lasa M."/>
            <person name="Polevoda B."/>
            <person name="Gazquez C."/>
            <person name="Elosegui-Artola A."/>
            <person name="Kim D.S."/>
            <person name="De Juan-Pardo E."/>
            <person name="Demeyer K."/>
            <person name="Hole K."/>
            <person name="Larrea E."/>
            <person name="Timmerman E."/>
            <person name="Prieto J."/>
            <person name="Arnesen T."/>
            <person name="Sherman F."/>
            <person name="Gevaert K."/>
            <person name="Aldabe R."/>
        </authorList>
    </citation>
    <scope>ACETYLATION [LARGE SCALE ANALYSIS] AT ALA-2</scope>
    <scope>CLEAVAGE OF INITIATOR METHIONINE [LARGE SCALE ANALYSIS]</scope>
    <scope>IDENTIFICATION BY MASS SPECTROMETRY [LARGE SCALE ANALYSIS]</scope>
</reference>
<reference key="14">
    <citation type="journal article" date="2013" name="J. Proteome Res.">
        <title>Toward a comprehensive characterization of a human cancer cell phosphoproteome.</title>
        <authorList>
            <person name="Zhou H."/>
            <person name="Di Palma S."/>
            <person name="Preisinger C."/>
            <person name="Peng M."/>
            <person name="Polat A.N."/>
            <person name="Heck A.J."/>
            <person name="Mohammed S."/>
        </authorList>
    </citation>
    <scope>PHOSPHORYLATION [LARGE SCALE ANALYSIS] AT SER-236</scope>
    <scope>IDENTIFICATION BY MASS SPECTROMETRY [LARGE SCALE ANALYSIS]</scope>
    <source>
        <tissue>Cervix carcinoma</tissue>
        <tissue>Erythroleukemia</tissue>
    </source>
</reference>
<reference key="15">
    <citation type="journal article" date="2014" name="J. Proteomics">
        <title>An enzyme assisted RP-RPLC approach for in-depth analysis of human liver phosphoproteome.</title>
        <authorList>
            <person name="Bian Y."/>
            <person name="Song C."/>
            <person name="Cheng K."/>
            <person name="Dong M."/>
            <person name="Wang F."/>
            <person name="Huang J."/>
            <person name="Sun D."/>
            <person name="Wang L."/>
            <person name="Ye M."/>
            <person name="Zou H."/>
        </authorList>
    </citation>
    <scope>PHOSPHORYLATION [LARGE SCALE ANALYSIS] AT THR-273 AND SER-276</scope>
    <scope>IDENTIFICATION BY MASS SPECTROMETRY [LARGE SCALE ANALYSIS]</scope>
    <source>
        <tissue>Liver</tissue>
    </source>
</reference>
<reference key="16">
    <citation type="journal article" date="2017" name="Nat. Struct. Mol. Biol.">
        <title>Site-specific mapping of the human SUMO proteome reveals co-modification with phosphorylation.</title>
        <authorList>
            <person name="Hendriks I.A."/>
            <person name="Lyon D."/>
            <person name="Young C."/>
            <person name="Jensen L.J."/>
            <person name="Vertegaal A.C."/>
            <person name="Nielsen M.L."/>
        </authorList>
    </citation>
    <scope>SUMOYLATION [LARGE SCALE ANALYSIS] AT LYS-416</scope>
    <scope>IDENTIFICATION BY MASS SPECTROMETRY [LARGE SCALE ANALYSIS]</scope>
</reference>
<reference key="17">
    <citation type="journal article" date="2021" name="Nat. Chem. Biol.">
        <title>Activity-based RNA-modifying enzyme probing reveals DUS3L-mediated dihydrouridylation.</title>
        <authorList>
            <person name="Dai W."/>
            <person name="Li A."/>
            <person name="Yu N.J."/>
            <person name="Nguyen T."/>
            <person name="Leach R.W."/>
            <person name="Wuehr M."/>
            <person name="Kleiner R.E."/>
        </authorList>
    </citation>
    <scope>FUNCTION</scope>
    <scope>ACTIVE SITE</scope>
    <scope>MUTAGENESIS OF CYS-396</scope>
</reference>
<name>DUS3L_HUMAN</name>
<gene>
    <name evidence="10 13" type="primary">DUS3L</name>
</gene>
<proteinExistence type="evidence at protein level"/>
<sequence>MAEGTAEAPLENGGGGDSGAGALERGVAPIKRQYLTTKEQFHQFLEAKGQEKTCRETEVGDPAGNELAEPEAKRIRLEDGQTADGQTEEAAEPGEQLQTQKRARGQNKGRPHVKPTNYDKNRLCPSLIQESAAKCFFGDRCRFLHDVGRYLETKPADLGPRCVLFETFGRCPYGVTCRFAGAHLRPEGQNLVQEELAARGTQPPSIRNGLDKALQQQLRKREVRFERAEQALRRFSQGPTPAAAVPEGTAAEGAPRQENCGAQQVPAGPGTSTPPSSPVRTCGPLTDEDVVRLRPCEKKRLDIRGKLYLAPLTTCGNLPFRRICKRFGADVTCGEMAVCTNLLQGQMSEWALLKRHQCEDIFGVQLEGAFPDTMTKCAELLSRTVEVDFVDINVGCPIDLVYKKGGGCALMNRSTKFQQIVRGMNQVLDVPLTVKIRTGVQERVNLAHRLLPELRDWGVALVTLHGRSREQRYTKLADWQYIEECVQAASPMPLFGNGDILSFEDANRAMQTGVTGIMIARGALLKPWLFTEIKEQRHWDISSSERLDILRDFTNYGLEHWGSDTQGVEKTRRFLLEWLSFLCRYVPVGLLERLPQRINERPPYYLGRDYLETLMASQKAADWIRISEMLLGPVPPSFAFLPKHKANAYK</sequence>
<keyword id="KW-0007">Acetylation</keyword>
<keyword id="KW-0025">Alternative splicing</keyword>
<keyword id="KW-0285">Flavoprotein</keyword>
<keyword id="KW-0288">FMN</keyword>
<keyword id="KW-1017">Isopeptide bond</keyword>
<keyword id="KW-0479">Metal-binding</keyword>
<keyword id="KW-0507">mRNA processing</keyword>
<keyword id="KW-0520">NAD</keyword>
<keyword id="KW-0521">NADP</keyword>
<keyword id="KW-0560">Oxidoreductase</keyword>
<keyword id="KW-0597">Phosphoprotein</keyword>
<keyword id="KW-1267">Proteomics identification</keyword>
<keyword id="KW-1185">Reference proteome</keyword>
<keyword id="KW-0677">Repeat</keyword>
<keyword id="KW-0819">tRNA processing</keyword>
<keyword id="KW-0832">Ubl conjugation</keyword>
<keyword id="KW-0862">Zinc</keyword>
<keyword id="KW-0863">Zinc-finger</keyword>